<feature type="chain" id="PRO_0000203132" description="Proteasome assembly chaperone 2">
    <location>
        <begin position="1"/>
        <end position="267"/>
    </location>
</feature>
<feature type="strand" evidence="9">
    <location>
        <begin position="3"/>
        <end position="7"/>
    </location>
</feature>
<feature type="helix" evidence="9">
    <location>
        <begin position="11"/>
        <end position="13"/>
    </location>
</feature>
<feature type="helix" evidence="9">
    <location>
        <begin position="14"/>
        <end position="25"/>
    </location>
</feature>
<feature type="helix" evidence="9">
    <location>
        <begin position="27"/>
        <end position="29"/>
    </location>
</feature>
<feature type="strand" evidence="9">
    <location>
        <begin position="31"/>
        <end position="35"/>
    </location>
</feature>
<feature type="strand" evidence="9">
    <location>
        <begin position="39"/>
        <end position="41"/>
    </location>
</feature>
<feature type="strand" evidence="9">
    <location>
        <begin position="44"/>
        <end position="46"/>
    </location>
</feature>
<feature type="strand" evidence="7">
    <location>
        <begin position="51"/>
        <end position="54"/>
    </location>
</feature>
<feature type="strand" evidence="9">
    <location>
        <begin position="69"/>
        <end position="75"/>
    </location>
</feature>
<feature type="turn" evidence="9">
    <location>
        <begin position="76"/>
        <end position="79"/>
    </location>
</feature>
<feature type="strand" evidence="9">
    <location>
        <begin position="80"/>
        <end position="85"/>
    </location>
</feature>
<feature type="helix" evidence="9">
    <location>
        <begin position="92"/>
        <end position="94"/>
    </location>
</feature>
<feature type="helix" evidence="9">
    <location>
        <begin position="95"/>
        <end position="101"/>
    </location>
</feature>
<feature type="helix" evidence="9">
    <location>
        <begin position="103"/>
        <end position="110"/>
    </location>
</feature>
<feature type="strand" evidence="9">
    <location>
        <begin position="114"/>
        <end position="121"/>
    </location>
</feature>
<feature type="helix" evidence="9">
    <location>
        <begin position="123"/>
        <end position="125"/>
    </location>
</feature>
<feature type="turn" evidence="8">
    <location>
        <begin position="127"/>
        <end position="129"/>
    </location>
</feature>
<feature type="strand" evidence="9">
    <location>
        <begin position="138"/>
        <end position="144"/>
    </location>
</feature>
<feature type="turn" evidence="9">
    <location>
        <begin position="145"/>
        <end position="148"/>
    </location>
</feature>
<feature type="helix" evidence="9">
    <location>
        <begin position="149"/>
        <end position="152"/>
    </location>
</feature>
<feature type="strand" evidence="9">
    <location>
        <begin position="168"/>
        <end position="170"/>
    </location>
</feature>
<feature type="strand" evidence="9">
    <location>
        <begin position="174"/>
        <end position="179"/>
    </location>
</feature>
<feature type="helix" evidence="9">
    <location>
        <begin position="184"/>
        <end position="194"/>
    </location>
</feature>
<feature type="strand" evidence="9">
    <location>
        <begin position="204"/>
        <end position="211"/>
    </location>
</feature>
<feature type="helix" evidence="9">
    <location>
        <begin position="218"/>
        <end position="230"/>
    </location>
</feature>
<feature type="helix" evidence="9">
    <location>
        <begin position="247"/>
        <end position="251"/>
    </location>
</feature>
<feature type="turn" evidence="9">
    <location>
        <begin position="259"/>
        <end position="261"/>
    </location>
</feature>
<feature type="turn" evidence="9">
    <location>
        <begin position="263"/>
        <end position="265"/>
    </location>
</feature>
<protein>
    <recommendedName>
        <fullName>Proteasome assembly chaperone 2</fullName>
    </recommendedName>
    <alternativeName>
        <fullName>Alpha-1-proteinase inhibitor-degradation deficient protein 66</fullName>
    </alternativeName>
    <alternativeName>
        <fullName>Proteasome biogenesis-associated protein 2</fullName>
    </alternativeName>
</protein>
<comment type="function">
    <text evidence="1 4 5">Involved in 20S proteasome assembly. Required for maximal proteasome activity. Affects the chymotrypsin-like activity of the proteasome. Can be degraded by the proteasome. Involved in the endoplasmic reticulum-associated degradation (ERAD).</text>
</comment>
<comment type="subunit">
    <text evidence="3 5">Component of the 20S proteasome chaperone. Forms a heterodimer with PBA1 that binds to proteasome precursors.</text>
</comment>
<comment type="interaction">
    <interactant intactId="EBI-27001">
        <id>P36040</id>
    </interactant>
    <interactant intactId="EBI-33792">
        <id>Q05778</id>
        <label>PBA1</label>
    </interactant>
    <organismsDiffer>false</organismsDiffer>
    <experiments>3</experiments>
</comment>
<comment type="subcellular location">
    <subcellularLocation>
        <location evidence="4">Cytoplasm</location>
    </subcellularLocation>
</comment>
<comment type="miscellaneous">
    <text evidence="2">Present with 2940 molecules/cell in log phase SD medium.</text>
</comment>
<comment type="miscellaneous">
    <text>Deletion induces the unfolded protein response (UPR).</text>
</comment>
<comment type="similarity">
    <text evidence="6">Belongs to the PSMG2 family.</text>
</comment>
<reference key="1">
    <citation type="journal article" date="1994" name="Nature">
        <title>Complete DNA sequence of yeast chromosome XI.</title>
        <authorList>
            <person name="Dujon B."/>
            <person name="Alexandraki D."/>
            <person name="Andre B."/>
            <person name="Ansorge W."/>
            <person name="Baladron V."/>
            <person name="Ballesta J.P.G."/>
            <person name="Banrevi A."/>
            <person name="Bolle P.-A."/>
            <person name="Bolotin-Fukuhara M."/>
            <person name="Bossier P."/>
            <person name="Bou G."/>
            <person name="Boyer J."/>
            <person name="Buitrago M.J."/>
            <person name="Cheret G."/>
            <person name="Colleaux L."/>
            <person name="Daignan-Fornier B."/>
            <person name="del Rey F."/>
            <person name="Dion C."/>
            <person name="Domdey H."/>
            <person name="Duesterhoeft A."/>
            <person name="Duesterhus S."/>
            <person name="Entian K.-D."/>
            <person name="Erfle H."/>
            <person name="Esteban P.F."/>
            <person name="Feldmann H."/>
            <person name="Fernandes L."/>
            <person name="Fobo G.M."/>
            <person name="Fritz C."/>
            <person name="Fukuhara H."/>
            <person name="Gabel C."/>
            <person name="Gaillon L."/>
            <person name="Garcia-Cantalejo J.M."/>
            <person name="Garcia-Ramirez J.J."/>
            <person name="Gent M.E."/>
            <person name="Ghazvini M."/>
            <person name="Goffeau A."/>
            <person name="Gonzalez A."/>
            <person name="Grothues D."/>
            <person name="Guerreiro P."/>
            <person name="Hegemann J.H."/>
            <person name="Hewitt N."/>
            <person name="Hilger F."/>
            <person name="Hollenberg C.P."/>
            <person name="Horaitis O."/>
            <person name="Indge K.J."/>
            <person name="Jacquier A."/>
            <person name="James C.M."/>
            <person name="Jauniaux J.-C."/>
            <person name="Jimenez A."/>
            <person name="Keuchel H."/>
            <person name="Kirchrath L."/>
            <person name="Kleine K."/>
            <person name="Koetter P."/>
            <person name="Legrain P."/>
            <person name="Liebl S."/>
            <person name="Louis E.J."/>
            <person name="Maia e Silva A."/>
            <person name="Marck C."/>
            <person name="Monnier A.-L."/>
            <person name="Moestl D."/>
            <person name="Mueller S."/>
            <person name="Obermaier B."/>
            <person name="Oliver S.G."/>
            <person name="Pallier C."/>
            <person name="Pascolo S."/>
            <person name="Pfeiffer F."/>
            <person name="Philippsen P."/>
            <person name="Planta R.J."/>
            <person name="Pohl F.M."/>
            <person name="Pohl T.M."/>
            <person name="Poehlmann R."/>
            <person name="Portetelle D."/>
            <person name="Purnelle B."/>
            <person name="Puzos V."/>
            <person name="Ramezani Rad M."/>
            <person name="Rasmussen S.W."/>
            <person name="Remacha M.A."/>
            <person name="Revuelta J.L."/>
            <person name="Richard G.-F."/>
            <person name="Rieger M."/>
            <person name="Rodrigues-Pousada C."/>
            <person name="Rose M."/>
            <person name="Rupp T."/>
            <person name="Santos M.A."/>
            <person name="Schwager C."/>
            <person name="Sensen C."/>
            <person name="Skala J."/>
            <person name="Soares H."/>
            <person name="Sor F."/>
            <person name="Stegemann J."/>
            <person name="Tettelin H."/>
            <person name="Thierry A."/>
            <person name="Tzermia M."/>
            <person name="Urrestarazu L.A."/>
            <person name="van Dyck L."/>
            <person name="van Vliet-Reedijk J.C."/>
            <person name="Valens M."/>
            <person name="Vandenbol M."/>
            <person name="Vilela C."/>
            <person name="Vissers S."/>
            <person name="von Wettstein D."/>
            <person name="Voss H."/>
            <person name="Wiemann S."/>
            <person name="Xu G."/>
            <person name="Zimmermann J."/>
            <person name="Haasemann M."/>
            <person name="Becker I."/>
            <person name="Mewes H.-W."/>
        </authorList>
    </citation>
    <scope>NUCLEOTIDE SEQUENCE [LARGE SCALE GENOMIC DNA]</scope>
    <source>
        <strain>ATCC 204508 / S288c</strain>
    </source>
</reference>
<reference key="2">
    <citation type="journal article" date="2014" name="G3 (Bethesda)">
        <title>The reference genome sequence of Saccharomyces cerevisiae: Then and now.</title>
        <authorList>
            <person name="Engel S.R."/>
            <person name="Dietrich F.S."/>
            <person name="Fisk D.G."/>
            <person name="Binkley G."/>
            <person name="Balakrishnan R."/>
            <person name="Costanzo M.C."/>
            <person name="Dwight S.S."/>
            <person name="Hitz B.C."/>
            <person name="Karra K."/>
            <person name="Nash R.S."/>
            <person name="Weng S."/>
            <person name="Wong E.D."/>
            <person name="Lloyd P."/>
            <person name="Skrzypek M.S."/>
            <person name="Miyasato S.R."/>
            <person name="Simison M."/>
            <person name="Cherry J.M."/>
        </authorList>
    </citation>
    <scope>GENOME REANNOTATION</scope>
    <source>
        <strain>ATCC 204508 / S288c</strain>
    </source>
</reference>
<reference key="3">
    <citation type="journal article" date="2007" name="Genome Res.">
        <title>Approaching a complete repository of sequence-verified protein-encoding clones for Saccharomyces cerevisiae.</title>
        <authorList>
            <person name="Hu Y."/>
            <person name="Rolfs A."/>
            <person name="Bhullar B."/>
            <person name="Murthy T.V.S."/>
            <person name="Zhu C."/>
            <person name="Berger M.F."/>
            <person name="Camargo A.A."/>
            <person name="Kelley F."/>
            <person name="McCarron S."/>
            <person name="Jepson D."/>
            <person name="Richardson A."/>
            <person name="Raphael J."/>
            <person name="Moreira D."/>
            <person name="Taycher E."/>
            <person name="Zuo D."/>
            <person name="Mohr S."/>
            <person name="Kane M.F."/>
            <person name="Williamson J."/>
            <person name="Simpson A.J.G."/>
            <person name="Bulyk M.L."/>
            <person name="Harlow E."/>
            <person name="Marsischky G."/>
            <person name="Kolodner R.D."/>
            <person name="LaBaer J."/>
        </authorList>
    </citation>
    <scope>NUCLEOTIDE SEQUENCE [GENOMIC DNA]</scope>
    <source>
        <strain>ATCC 204508 / S288c</strain>
    </source>
</reference>
<reference key="4">
    <citation type="journal article" date="2007" name="EMBO J.">
        <title>Beta-subunit appendages promote 20S proteasome assembly by overcoming an Ump1-dependent checkpoint.</title>
        <authorList>
            <person name="Li X."/>
            <person name="Kusmierczyk A.R."/>
            <person name="Wong P."/>
            <person name="Emili A."/>
            <person name="Hochstrasser M."/>
        </authorList>
    </citation>
    <scope>PROTEIN SEQUENCE OF 40-76; 79-86; 179-187 AND 243-259</scope>
    <scope>GENE NAME</scope>
    <scope>INTERACTION WITH PBA1</scope>
    <scope>SUBUNIT</scope>
    <scope>IDENTIFICATION BY MASS SPECTROMETRY</scope>
</reference>
<reference key="5">
    <citation type="journal article" date="2003" name="J. Cell Sci.">
        <title>Differential requirements of novel A1PiZ degradation deficient (ADD) genes in ER-associated protein degradation.</title>
        <authorList>
            <person name="Palmer E.A."/>
            <person name="Kruse K.B."/>
            <person name="Fewell S.W."/>
            <person name="Buchanan S.M."/>
            <person name="Brodsky J.L."/>
            <person name="McCracken A.A."/>
        </authorList>
    </citation>
    <scope>GENE NAME</scope>
    <scope>FUNCTION</scope>
    <scope>DELETION MUTANT</scope>
</reference>
<reference key="6">
    <citation type="journal article" date="2003" name="Nature">
        <title>Global analysis of protein expression in yeast.</title>
        <authorList>
            <person name="Ghaemmaghami S."/>
            <person name="Huh W.-K."/>
            <person name="Bower K."/>
            <person name="Howson R.W."/>
            <person name="Belle A."/>
            <person name="Dephoure N."/>
            <person name="O'Shea E.K."/>
            <person name="Weissman J.S."/>
        </authorList>
    </citation>
    <scope>LEVEL OF PROTEIN EXPRESSION [LARGE SCALE ANALYSIS]</scope>
</reference>
<reference key="7">
    <citation type="journal article" date="2007" name="Mol. Biol. Cell">
        <title>ADD66, a gene involved in the endoplasmic reticulum-associated degradation of alpha-1-antitrypsin-Z in yeast, facilitates proteasome activity and assembly.</title>
        <authorList>
            <person name="Scott C.M."/>
            <person name="Kruse K.B."/>
            <person name="Schmidt B.Z."/>
            <person name="Perlmutter D.H."/>
            <person name="McCracken A.A."/>
            <person name="Brodsky J.L."/>
        </authorList>
    </citation>
    <scope>FUNCTION</scope>
    <scope>SUBCELLULAR LOCATION</scope>
</reference>
<reference key="8">
    <citation type="journal article" date="2007" name="Mol. Cell">
        <title>20S proteasome assembly is orchestrated by two distinct pairs of chaperones in yeast and in mammals.</title>
        <authorList>
            <person name="Le Tallec B."/>
            <person name="Barrault M.-B."/>
            <person name="Courbeyrette R."/>
            <person name="Guerois R."/>
            <person name="Marsolier-Kergoat M.-C."/>
            <person name="Peyroche A."/>
        </authorList>
    </citation>
    <scope>GENE NAME</scope>
    <scope>FUNCTION</scope>
    <scope>INTERACTION WITH PBA1</scope>
    <scope>SUBUNIT</scope>
</reference>
<evidence type="ECO:0000269" key="1">
    <source>
    </source>
</evidence>
<evidence type="ECO:0000269" key="2">
    <source>
    </source>
</evidence>
<evidence type="ECO:0000269" key="3">
    <source>
    </source>
</evidence>
<evidence type="ECO:0000269" key="4">
    <source>
    </source>
</evidence>
<evidence type="ECO:0000269" key="5">
    <source>
    </source>
</evidence>
<evidence type="ECO:0000305" key="6"/>
<evidence type="ECO:0007829" key="7">
    <source>
        <dbReference type="PDB" id="4G4S"/>
    </source>
</evidence>
<evidence type="ECO:0007829" key="8">
    <source>
        <dbReference type="PDB" id="7LS6"/>
    </source>
</evidence>
<evidence type="ECO:0007829" key="9">
    <source>
        <dbReference type="PDB" id="8RVL"/>
    </source>
</evidence>
<keyword id="KW-0002">3D-structure</keyword>
<keyword id="KW-0143">Chaperone</keyword>
<keyword id="KW-0963">Cytoplasm</keyword>
<keyword id="KW-0903">Direct protein sequencing</keyword>
<keyword id="KW-1185">Reference proteome</keyword>
<gene>
    <name type="primary">ADD66</name>
    <name type="synonym">PBA2</name>
    <name type="synonym">POC2</name>
    <name type="ordered locus">YKL206C</name>
</gene>
<accession>P36040</accession>
<accession>D6VWZ7</accession>
<organism>
    <name type="scientific">Saccharomyces cerevisiae (strain ATCC 204508 / S288c)</name>
    <name type="common">Baker's yeast</name>
    <dbReference type="NCBI Taxonomy" id="559292"/>
    <lineage>
        <taxon>Eukaryota</taxon>
        <taxon>Fungi</taxon>
        <taxon>Dikarya</taxon>
        <taxon>Ascomycota</taxon>
        <taxon>Saccharomycotina</taxon>
        <taxon>Saccharomycetes</taxon>
        <taxon>Saccharomycetales</taxon>
        <taxon>Saccharomycetaceae</taxon>
        <taxon>Saccharomyces</taxon>
    </lineage>
</organism>
<name>POC2_YEAST</name>
<sequence>MSCLVLPLVSVGNIPQLSIDWLLNSQANEWEYLEALDSKYLVEFVGPLDRPEDGSDSLYKDADMKYSSALEVFYNKKRGLFAIQQRTPLVSVNYLNNFIVEIILPFLSKYNISEICIWDSLYAMEDENGVIVRPQEVYSLGEFYFDDEAELLSNLHLNDQESMVNNWLHFTPTSFQDKISVDQPIFKILFQILNASQRPKALRSIKYCSCLANEGDNSLDSQQFLQWIISQKVIKNAPPIVKFVRPISWQGAYGMADARDKFVDLYN</sequence>
<dbReference type="EMBL" id="Z28206">
    <property type="protein sequence ID" value="CAA82051.1"/>
    <property type="molecule type" value="Genomic_DNA"/>
</dbReference>
<dbReference type="EMBL" id="AY558394">
    <property type="protein sequence ID" value="AAS56720.1"/>
    <property type="molecule type" value="Genomic_DNA"/>
</dbReference>
<dbReference type="EMBL" id="BK006944">
    <property type="protein sequence ID" value="DAA08963.1"/>
    <property type="molecule type" value="Genomic_DNA"/>
</dbReference>
<dbReference type="PIR" id="S38044">
    <property type="entry name" value="S38044"/>
</dbReference>
<dbReference type="RefSeq" id="NP_012716.1">
    <property type="nucleotide sequence ID" value="NM_001179771.1"/>
</dbReference>
<dbReference type="PDB" id="4G4S">
    <property type="method" value="X-ray"/>
    <property type="resolution" value="2.49 A"/>
    <property type="chains" value="P=1-267"/>
</dbReference>
<dbReference type="PDB" id="7LS6">
    <property type="method" value="EM"/>
    <property type="resolution" value="3.17 A"/>
    <property type="chains" value="P=1-267"/>
</dbReference>
<dbReference type="PDB" id="7LSX">
    <property type="method" value="EM"/>
    <property type="resolution" value="3.61 A"/>
    <property type="chains" value="P=1-267"/>
</dbReference>
<dbReference type="PDB" id="8RVL">
    <property type="method" value="EM"/>
    <property type="resolution" value="2.14 A"/>
    <property type="chains" value="5/8=1-267"/>
</dbReference>
<dbReference type="PDB" id="8RVO">
    <property type="method" value="EM"/>
    <property type="resolution" value="2.69 A"/>
    <property type="chains" value="5/8=1-267"/>
</dbReference>
<dbReference type="PDB" id="8RVP">
    <property type="method" value="EM"/>
    <property type="resolution" value="2.28 A"/>
    <property type="chains" value="5/8=1-267"/>
</dbReference>
<dbReference type="PDB" id="8T08">
    <property type="method" value="EM"/>
    <property type="resolution" value="3.00 A"/>
    <property type="chains" value="P/g=1-267"/>
</dbReference>
<dbReference type="PDB" id="8U6Y">
    <property type="method" value="EM"/>
    <property type="resolution" value="2.80 A"/>
    <property type="chains" value="P/g=1-267"/>
</dbReference>
<dbReference type="PDBsum" id="4G4S"/>
<dbReference type="PDBsum" id="7LS6"/>
<dbReference type="PDBsum" id="7LSX"/>
<dbReference type="PDBsum" id="8RVL"/>
<dbReference type="PDBsum" id="8RVO"/>
<dbReference type="PDBsum" id="8RVP"/>
<dbReference type="PDBsum" id="8T08"/>
<dbReference type="PDBsum" id="8U6Y"/>
<dbReference type="EMDB" id="EMD-19523"/>
<dbReference type="EMDB" id="EMD-19527"/>
<dbReference type="EMDB" id="EMD-19528"/>
<dbReference type="EMDB" id="EMD-23503"/>
<dbReference type="EMDB" id="EMD-23508"/>
<dbReference type="EMDB" id="EMD-40938"/>
<dbReference type="EMDB" id="EMD-41963"/>
<dbReference type="SMR" id="P36040"/>
<dbReference type="BioGRID" id="33917">
    <property type="interactions" value="199"/>
</dbReference>
<dbReference type="ComplexPortal" id="CPX-8171">
    <property type="entry name" value="PBA1-PBA2 proteasomal chaperone complex"/>
</dbReference>
<dbReference type="DIP" id="DIP-6515N"/>
<dbReference type="FunCoup" id="P36040">
    <property type="interactions" value="172"/>
</dbReference>
<dbReference type="IntAct" id="P36040">
    <property type="interactions" value="32"/>
</dbReference>
<dbReference type="MINT" id="P36040"/>
<dbReference type="STRING" id="4932.YKL206C"/>
<dbReference type="iPTMnet" id="P36040"/>
<dbReference type="PaxDb" id="4932-YKL206C"/>
<dbReference type="PeptideAtlas" id="P36040"/>
<dbReference type="EnsemblFungi" id="YKL206C_mRNA">
    <property type="protein sequence ID" value="YKL206C"/>
    <property type="gene ID" value="YKL206C"/>
</dbReference>
<dbReference type="GeneID" id="853629"/>
<dbReference type="KEGG" id="sce:YKL206C"/>
<dbReference type="AGR" id="SGD:S000001689"/>
<dbReference type="SGD" id="S000001689">
    <property type="gene designation" value="ADD66"/>
</dbReference>
<dbReference type="VEuPathDB" id="FungiDB:YKL206C"/>
<dbReference type="eggNOG" id="KOG3112">
    <property type="taxonomic scope" value="Eukaryota"/>
</dbReference>
<dbReference type="GeneTree" id="ENSGT00390000018415"/>
<dbReference type="HOGENOM" id="CLU_062640_2_1_1"/>
<dbReference type="InParanoid" id="P36040"/>
<dbReference type="OMA" id="PISWKGV"/>
<dbReference type="OrthoDB" id="10260712at2759"/>
<dbReference type="BioCyc" id="YEAST:G3O-31965-MONOMER"/>
<dbReference type="Reactome" id="R-SCE-9907900">
    <property type="pathway name" value="Proteasome assembly"/>
</dbReference>
<dbReference type="BioGRID-ORCS" id="853629">
    <property type="hits" value="2 hits in 10 CRISPR screens"/>
</dbReference>
<dbReference type="EvolutionaryTrace" id="P36040"/>
<dbReference type="PRO" id="PR:P36040"/>
<dbReference type="Proteomes" id="UP000002311">
    <property type="component" value="Chromosome XI"/>
</dbReference>
<dbReference type="RNAct" id="P36040">
    <property type="molecule type" value="protein"/>
</dbReference>
<dbReference type="GO" id="GO:0005737">
    <property type="term" value="C:cytoplasm"/>
    <property type="evidence" value="ECO:0007005"/>
    <property type="project" value="SGD"/>
</dbReference>
<dbReference type="GO" id="GO:0005829">
    <property type="term" value="C:cytosol"/>
    <property type="evidence" value="ECO:0000314"/>
    <property type="project" value="SGD"/>
</dbReference>
<dbReference type="GO" id="GO:0005634">
    <property type="term" value="C:nucleus"/>
    <property type="evidence" value="ECO:0000318"/>
    <property type="project" value="GO_Central"/>
</dbReference>
<dbReference type="GO" id="GO:0043248">
    <property type="term" value="P:proteasome assembly"/>
    <property type="evidence" value="ECO:0000315"/>
    <property type="project" value="SGD"/>
</dbReference>
<dbReference type="Gene3D" id="3.40.50.10900">
    <property type="entry name" value="PAC-like subunit"/>
    <property type="match status" value="2"/>
</dbReference>
<dbReference type="InterPro" id="IPR019151">
    <property type="entry name" value="Proteasome_assmbl_chaperone_2"/>
</dbReference>
<dbReference type="InterPro" id="IPR016562">
    <property type="entry name" value="Proteasome_assmbl_chp_2_euk"/>
</dbReference>
<dbReference type="InterPro" id="IPR038389">
    <property type="entry name" value="PSMG2_sf"/>
</dbReference>
<dbReference type="PANTHER" id="PTHR12970">
    <property type="entry name" value="PROTEASOME ASSEMBLY CHAPERONE 2"/>
    <property type="match status" value="1"/>
</dbReference>
<dbReference type="PANTHER" id="PTHR12970:SF1">
    <property type="entry name" value="PROTEASOME ASSEMBLY CHAPERONE 2"/>
    <property type="match status" value="1"/>
</dbReference>
<dbReference type="Pfam" id="PF09754">
    <property type="entry name" value="PAC2"/>
    <property type="match status" value="1"/>
</dbReference>
<dbReference type="PIRSF" id="PIRSF010044">
    <property type="entry name" value="UCP010044"/>
    <property type="match status" value="1"/>
</dbReference>
<proteinExistence type="evidence at protein level"/>